<sequence length="688" mass="78780">MARLRSRTATTEKDATESSKVPVPRRRRGQHEDTEEPDTYGLEDDEKSSGRPFRILEKLPCSAEPPRYDVLTHALSVRDSAVLYNSLLASRRTWIKAEMFELYWSKQYMNMKERERMLKEGIDPDDIDQSAAREKMHKLCDGILTGGPHTLPVRLFILKNDEIEQKWQFMQESRKKEKEVRRKREAEEKERRREERKRLQQLKKERKLKEVEHTKKEKIERKRENDTERDQLRKGRKDNKGPSVLSRMGTTIKSKGLTTFSKAQQQEIDNQKMIANLNLLAQRDPALNKLMIAVANGQAPPADVERFKVFIERARNMEPPPNWKPRLSSRPVIKRTEEPTVEQQESASQTPSTPLPRKASPESSQVDNLSSPPHGSDPNSSFTEASMSDSRGELSETKSGGSLVPDSTGSSGQALDKGPTDASGSANDLSRPGATLSSTDGAPPLKQETIPVRDMGDKNADKPLEAHGAISEKGTTITIKAEEGTAPRQKRKYTKRKKEVEDEDKSMQLTTFQQKYLNGADILFEYLENSNMRFLFPKDAILEQLENEESYLMSWIVVHNKKEIEQFKLKVLKGLNKNKPNEEETEVQPCLFNVYEHPNCPEVLYTPMTVTLSNIPKKFTPIILNSVNPAESVRAYMSTILARGRRLNGFNLWYQLDAYDDKDLAESLRCELKEYEQGFKSKRQKKQL</sequence>
<comment type="function">
    <text evidence="1">Component of the SWR1 complex which mediates the ATP-dependent exchange of histone H2A for the H2A variant HZT1 leading to transcriptional regulation of selected genes by chromatin remodeling. Involved in chromosome stability (By similarity).</text>
</comment>
<comment type="subunit">
    <text evidence="1">Component of the SWR1 chromatin remodeling complex.</text>
</comment>
<comment type="subcellular location">
    <subcellularLocation>
        <location evidence="1">Nucleus</location>
    </subcellularLocation>
</comment>
<comment type="similarity">
    <text evidence="4">Belongs to the SWC3 family.</text>
</comment>
<proteinExistence type="inferred from homology"/>
<gene>
    <name type="primary">SWC3</name>
    <name type="ordered locus">AEL336W</name>
</gene>
<protein>
    <recommendedName>
        <fullName>SWR1-complex protein 3</fullName>
    </recommendedName>
</protein>
<reference key="1">
    <citation type="journal article" date="2004" name="Science">
        <title>The Ashbya gossypii genome as a tool for mapping the ancient Saccharomyces cerevisiae genome.</title>
        <authorList>
            <person name="Dietrich F.S."/>
            <person name="Voegeli S."/>
            <person name="Brachat S."/>
            <person name="Lerch A."/>
            <person name="Gates K."/>
            <person name="Steiner S."/>
            <person name="Mohr C."/>
            <person name="Poehlmann R."/>
            <person name="Luedi P."/>
            <person name="Choi S."/>
            <person name="Wing R.A."/>
            <person name="Flavier A."/>
            <person name="Gaffney T.D."/>
            <person name="Philippsen P."/>
        </authorList>
    </citation>
    <scope>NUCLEOTIDE SEQUENCE [LARGE SCALE GENOMIC DNA]</scope>
    <source>
        <strain>ATCC 10895 / CBS 109.51 / FGSC 9923 / NRRL Y-1056</strain>
    </source>
</reference>
<reference key="2">
    <citation type="journal article" date="2013" name="G3 (Bethesda)">
        <title>Genomes of Ashbya fungi isolated from insects reveal four mating-type loci, numerous translocations, lack of transposons, and distinct gene duplications.</title>
        <authorList>
            <person name="Dietrich F.S."/>
            <person name="Voegeli S."/>
            <person name="Kuo S."/>
            <person name="Philippsen P."/>
        </authorList>
    </citation>
    <scope>GENOME REANNOTATION</scope>
    <scope>SEQUENCE REVISION TO 446-463</scope>
    <source>
        <strain>ATCC 10895 / CBS 109.51 / FGSC 9923 / NRRL Y-1056</strain>
    </source>
</reference>
<organism>
    <name type="scientific">Eremothecium gossypii (strain ATCC 10895 / CBS 109.51 / FGSC 9923 / NRRL Y-1056)</name>
    <name type="common">Yeast</name>
    <name type="synonym">Ashbya gossypii</name>
    <dbReference type="NCBI Taxonomy" id="284811"/>
    <lineage>
        <taxon>Eukaryota</taxon>
        <taxon>Fungi</taxon>
        <taxon>Dikarya</taxon>
        <taxon>Ascomycota</taxon>
        <taxon>Saccharomycotina</taxon>
        <taxon>Saccharomycetes</taxon>
        <taxon>Saccharomycetales</taxon>
        <taxon>Saccharomycetaceae</taxon>
        <taxon>Eremothecium</taxon>
    </lineage>
</organism>
<name>SWC3_EREGS</name>
<evidence type="ECO:0000250" key="1"/>
<evidence type="ECO:0000255" key="2"/>
<evidence type="ECO:0000256" key="3">
    <source>
        <dbReference type="SAM" id="MobiDB-lite"/>
    </source>
</evidence>
<evidence type="ECO:0000305" key="4"/>
<dbReference type="EMBL" id="AE016818">
    <property type="protein sequence ID" value="AAS52348.2"/>
    <property type="molecule type" value="Genomic_DNA"/>
</dbReference>
<dbReference type="RefSeq" id="NP_984524.2">
    <property type="nucleotide sequence ID" value="NM_209877.2"/>
</dbReference>
<dbReference type="SMR" id="Q758T8"/>
<dbReference type="FunCoup" id="Q758T8">
    <property type="interactions" value="140"/>
</dbReference>
<dbReference type="STRING" id="284811.Q758T8"/>
<dbReference type="EnsemblFungi" id="AAS52348">
    <property type="protein sequence ID" value="AAS52348"/>
    <property type="gene ID" value="AGOS_AEL336W"/>
</dbReference>
<dbReference type="GeneID" id="4620694"/>
<dbReference type="KEGG" id="ago:AGOS_AEL336W"/>
<dbReference type="eggNOG" id="ENOG502QWM7">
    <property type="taxonomic scope" value="Eukaryota"/>
</dbReference>
<dbReference type="HOGENOM" id="CLU_008595_1_0_1"/>
<dbReference type="InParanoid" id="Q758T8"/>
<dbReference type="OMA" id="MQKMCDC"/>
<dbReference type="OrthoDB" id="4097064at2759"/>
<dbReference type="Proteomes" id="UP000000591">
    <property type="component" value="Chromosome V"/>
</dbReference>
<dbReference type="GO" id="GO:0000812">
    <property type="term" value="C:Swr1 complex"/>
    <property type="evidence" value="ECO:0000318"/>
    <property type="project" value="GO_Central"/>
</dbReference>
<dbReference type="GO" id="GO:0140849">
    <property type="term" value="F:ATP-dependent H2AZ histone chaperone activity"/>
    <property type="evidence" value="ECO:0007669"/>
    <property type="project" value="InterPro"/>
</dbReference>
<dbReference type="GO" id="GO:0007029">
    <property type="term" value="P:endoplasmic reticulum organization"/>
    <property type="evidence" value="ECO:0007669"/>
    <property type="project" value="EnsemblFungi"/>
</dbReference>
<dbReference type="InterPro" id="IPR037651">
    <property type="entry name" value="Swc3"/>
</dbReference>
<dbReference type="PANTHER" id="PTHR28108">
    <property type="entry name" value="SWR1-COMPLEX PROTEIN 3"/>
    <property type="match status" value="1"/>
</dbReference>
<dbReference type="PANTHER" id="PTHR28108:SF1">
    <property type="entry name" value="SWR1-COMPLEX PROTEIN 3"/>
    <property type="match status" value="1"/>
</dbReference>
<dbReference type="Pfam" id="PF24707">
    <property type="entry name" value="Swc3"/>
    <property type="match status" value="1"/>
</dbReference>
<accession>Q758T8</accession>
<keyword id="KW-0010">Activator</keyword>
<keyword id="KW-0156">Chromatin regulator</keyword>
<keyword id="KW-0175">Coiled coil</keyword>
<keyword id="KW-0539">Nucleus</keyword>
<keyword id="KW-1185">Reference proteome</keyword>
<keyword id="KW-0804">Transcription</keyword>
<keyword id="KW-0805">Transcription regulation</keyword>
<feature type="chain" id="PRO_0000076332" description="SWR1-complex protein 3">
    <location>
        <begin position="1"/>
        <end position="688"/>
    </location>
</feature>
<feature type="region of interest" description="Disordered" evidence="3">
    <location>
        <begin position="1"/>
        <end position="48"/>
    </location>
</feature>
<feature type="region of interest" description="Disordered" evidence="3">
    <location>
        <begin position="174"/>
        <end position="252"/>
    </location>
</feature>
<feature type="region of interest" description="Disordered" evidence="3">
    <location>
        <begin position="317"/>
        <end position="469"/>
    </location>
</feature>
<feature type="region of interest" description="Disordered" evidence="3">
    <location>
        <begin position="483"/>
        <end position="504"/>
    </location>
</feature>
<feature type="coiled-coil region" evidence="2">
    <location>
        <begin position="168"/>
        <end position="225"/>
    </location>
</feature>
<feature type="compositionally biased region" description="Acidic residues" evidence="3">
    <location>
        <begin position="33"/>
        <end position="46"/>
    </location>
</feature>
<feature type="compositionally biased region" description="Basic and acidic residues" evidence="3">
    <location>
        <begin position="174"/>
        <end position="198"/>
    </location>
</feature>
<feature type="compositionally biased region" description="Basic and acidic residues" evidence="3">
    <location>
        <begin position="207"/>
        <end position="233"/>
    </location>
</feature>
<feature type="compositionally biased region" description="Polar residues" evidence="3">
    <location>
        <begin position="341"/>
        <end position="352"/>
    </location>
</feature>
<feature type="compositionally biased region" description="Polar residues" evidence="3">
    <location>
        <begin position="361"/>
        <end position="389"/>
    </location>
</feature>
<feature type="compositionally biased region" description="Polar residues" evidence="3">
    <location>
        <begin position="397"/>
        <end position="413"/>
    </location>
</feature>
<feature type="compositionally biased region" description="Basic and acidic residues" evidence="3">
    <location>
        <begin position="454"/>
        <end position="465"/>
    </location>
</feature>
<feature type="compositionally biased region" description="Basic residues" evidence="3">
    <location>
        <begin position="488"/>
        <end position="497"/>
    </location>
</feature>